<name>LYTG_BACSU</name>
<feature type="signal peptide" evidence="1">
    <location>
        <begin position="1"/>
        <end position="29"/>
    </location>
</feature>
<feature type="chain" id="PRO_0000012119" description="Exo-glucosaminidase LytG">
    <location>
        <begin position="30"/>
        <end position="282"/>
    </location>
</feature>
<feature type="domain" description="GW" evidence="2">
    <location>
        <begin position="203"/>
        <end position="281"/>
    </location>
</feature>
<organism>
    <name type="scientific">Bacillus subtilis (strain 168)</name>
    <dbReference type="NCBI Taxonomy" id="224308"/>
    <lineage>
        <taxon>Bacteria</taxon>
        <taxon>Bacillati</taxon>
        <taxon>Bacillota</taxon>
        <taxon>Bacilli</taxon>
        <taxon>Bacillales</taxon>
        <taxon>Bacillaceae</taxon>
        <taxon>Bacillus</taxon>
    </lineage>
</organism>
<evidence type="ECO:0000255" key="1"/>
<evidence type="ECO:0000255" key="2">
    <source>
        <dbReference type="PROSITE-ProRule" id="PRU01116"/>
    </source>
</evidence>
<evidence type="ECO:0000269" key="3">
    <source>
    </source>
</evidence>
<evidence type="ECO:0000305" key="4"/>
<gene>
    <name type="primary">lytG</name>
    <name type="synonym">yubE</name>
    <name type="ordered locus">BSU31120</name>
</gene>
<sequence>MARKKLKKRKLLISLFFLVSIPLALFVLATTLSKPIEISKETEEIDEQQVFIDSLSGHAQILYEKYHVLPSITIAQAILESDWGNSELAAKANNLFGVKGNYKGHHVTMETDEVEKGKRKTIRAKFRKYSTFFESMDDHAQLFVRGTSWNKKKYKPVLEAGNYKEAATALQTSGYATDPDYADKISAIVEKYDLDEYDEVNPSLKSVDLNASIKDSAVQDVWSKPSTDDRSIRLTSAQSYVGKDIKVVSKKQKGQSVWYQFQINDKLIGWIDDSAVEIKEAT</sequence>
<protein>
    <recommendedName>
        <fullName>Exo-glucosaminidase LytG</fullName>
        <ecNumber>3.2.1.-</ecNumber>
    </recommendedName>
    <alternativeName>
        <fullName>Autolysin LytG</fullName>
    </alternativeName>
    <alternativeName>
        <fullName>Exo-beta-N-acetylglucosaminidase LytG</fullName>
    </alternativeName>
    <alternativeName>
        <fullName>Peptidoglycan hydrolase LytG</fullName>
    </alternativeName>
</protein>
<comment type="function">
    <text evidence="3">Is the major glucosaminidase responsible for peptidoglycan structural determination during vegetative growth. Catalyzes the hydrolysis of 1,4-beta-linkages between N-acetyl-D-glucosamine and N-acetylmuramic acid residues in peptidoglycan. Acts processively from the ends of the glycan strands. Also plays a role in motility, chemotaxis and cell division.</text>
</comment>
<comment type="cofactor">
    <cofactor evidence="3">
        <name>Mg(2+)</name>
        <dbReference type="ChEBI" id="CHEBI:18420"/>
    </cofactor>
</comment>
<comment type="activity regulation">
    <text>Inhibited by EDTA.</text>
</comment>
<comment type="biophysicochemical properties">
    <phDependence>
        <text>Optimal pH is about 5.7.</text>
    </phDependence>
</comment>
<comment type="subcellular location">
    <subcellularLocation>
        <location evidence="3">Secreted</location>
        <location evidence="3">Cell wall</location>
    </subcellularLocation>
</comment>
<comment type="developmental stage">
    <text>Expressed during vegetative growth.</text>
</comment>
<comment type="induction">
    <text evidence="3">Expressed under control of sigma-A RNA polymerase.</text>
</comment>
<comment type="similarity">
    <text evidence="4">Belongs to the glycosyl hydrolase 73 family.</text>
</comment>
<accession>O32083</accession>
<keyword id="KW-0134">Cell wall</keyword>
<keyword id="KW-0961">Cell wall biogenesis/degradation</keyword>
<keyword id="KW-0326">Glycosidase</keyword>
<keyword id="KW-0378">Hydrolase</keyword>
<keyword id="KW-0460">Magnesium</keyword>
<keyword id="KW-1185">Reference proteome</keyword>
<keyword id="KW-0964">Secreted</keyword>
<keyword id="KW-0732">Signal</keyword>
<proteinExistence type="evidence at protein level"/>
<reference key="1">
    <citation type="journal article" date="1997" name="Nature">
        <title>The complete genome sequence of the Gram-positive bacterium Bacillus subtilis.</title>
        <authorList>
            <person name="Kunst F."/>
            <person name="Ogasawara N."/>
            <person name="Moszer I."/>
            <person name="Albertini A.M."/>
            <person name="Alloni G."/>
            <person name="Azevedo V."/>
            <person name="Bertero M.G."/>
            <person name="Bessieres P."/>
            <person name="Bolotin A."/>
            <person name="Borchert S."/>
            <person name="Borriss R."/>
            <person name="Boursier L."/>
            <person name="Brans A."/>
            <person name="Braun M."/>
            <person name="Brignell S.C."/>
            <person name="Bron S."/>
            <person name="Brouillet S."/>
            <person name="Bruschi C.V."/>
            <person name="Caldwell B."/>
            <person name="Capuano V."/>
            <person name="Carter N.M."/>
            <person name="Choi S.-K."/>
            <person name="Codani J.-J."/>
            <person name="Connerton I.F."/>
            <person name="Cummings N.J."/>
            <person name="Daniel R.A."/>
            <person name="Denizot F."/>
            <person name="Devine K.M."/>
            <person name="Duesterhoeft A."/>
            <person name="Ehrlich S.D."/>
            <person name="Emmerson P.T."/>
            <person name="Entian K.-D."/>
            <person name="Errington J."/>
            <person name="Fabret C."/>
            <person name="Ferrari E."/>
            <person name="Foulger D."/>
            <person name="Fritz C."/>
            <person name="Fujita M."/>
            <person name="Fujita Y."/>
            <person name="Fuma S."/>
            <person name="Galizzi A."/>
            <person name="Galleron N."/>
            <person name="Ghim S.-Y."/>
            <person name="Glaser P."/>
            <person name="Goffeau A."/>
            <person name="Golightly E.J."/>
            <person name="Grandi G."/>
            <person name="Guiseppi G."/>
            <person name="Guy B.J."/>
            <person name="Haga K."/>
            <person name="Haiech J."/>
            <person name="Harwood C.R."/>
            <person name="Henaut A."/>
            <person name="Hilbert H."/>
            <person name="Holsappel S."/>
            <person name="Hosono S."/>
            <person name="Hullo M.-F."/>
            <person name="Itaya M."/>
            <person name="Jones L.-M."/>
            <person name="Joris B."/>
            <person name="Karamata D."/>
            <person name="Kasahara Y."/>
            <person name="Klaerr-Blanchard M."/>
            <person name="Klein C."/>
            <person name="Kobayashi Y."/>
            <person name="Koetter P."/>
            <person name="Koningstein G."/>
            <person name="Krogh S."/>
            <person name="Kumano M."/>
            <person name="Kurita K."/>
            <person name="Lapidus A."/>
            <person name="Lardinois S."/>
            <person name="Lauber J."/>
            <person name="Lazarevic V."/>
            <person name="Lee S.-M."/>
            <person name="Levine A."/>
            <person name="Liu H."/>
            <person name="Masuda S."/>
            <person name="Mauel C."/>
            <person name="Medigue C."/>
            <person name="Medina N."/>
            <person name="Mellado R.P."/>
            <person name="Mizuno M."/>
            <person name="Moestl D."/>
            <person name="Nakai S."/>
            <person name="Noback M."/>
            <person name="Noone D."/>
            <person name="O'Reilly M."/>
            <person name="Ogawa K."/>
            <person name="Ogiwara A."/>
            <person name="Oudega B."/>
            <person name="Park S.-H."/>
            <person name="Parro V."/>
            <person name="Pohl T.M."/>
            <person name="Portetelle D."/>
            <person name="Porwollik S."/>
            <person name="Prescott A.M."/>
            <person name="Presecan E."/>
            <person name="Pujic P."/>
            <person name="Purnelle B."/>
            <person name="Rapoport G."/>
            <person name="Rey M."/>
            <person name="Reynolds S."/>
            <person name="Rieger M."/>
            <person name="Rivolta C."/>
            <person name="Rocha E."/>
            <person name="Roche B."/>
            <person name="Rose M."/>
            <person name="Sadaie Y."/>
            <person name="Sato T."/>
            <person name="Scanlan E."/>
            <person name="Schleich S."/>
            <person name="Schroeter R."/>
            <person name="Scoffone F."/>
            <person name="Sekiguchi J."/>
            <person name="Sekowska A."/>
            <person name="Seror S.J."/>
            <person name="Serror P."/>
            <person name="Shin B.-S."/>
            <person name="Soldo B."/>
            <person name="Sorokin A."/>
            <person name="Tacconi E."/>
            <person name="Takagi T."/>
            <person name="Takahashi H."/>
            <person name="Takemaru K."/>
            <person name="Takeuchi M."/>
            <person name="Tamakoshi A."/>
            <person name="Tanaka T."/>
            <person name="Terpstra P."/>
            <person name="Tognoni A."/>
            <person name="Tosato V."/>
            <person name="Uchiyama S."/>
            <person name="Vandenbol M."/>
            <person name="Vannier F."/>
            <person name="Vassarotti A."/>
            <person name="Viari A."/>
            <person name="Wambutt R."/>
            <person name="Wedler E."/>
            <person name="Wedler H."/>
            <person name="Weitzenegger T."/>
            <person name="Winters P."/>
            <person name="Wipat A."/>
            <person name="Yamamoto H."/>
            <person name="Yamane K."/>
            <person name="Yasumoto K."/>
            <person name="Yata K."/>
            <person name="Yoshida K."/>
            <person name="Yoshikawa H.-F."/>
            <person name="Zumstein E."/>
            <person name="Yoshikawa H."/>
            <person name="Danchin A."/>
        </authorList>
    </citation>
    <scope>NUCLEOTIDE SEQUENCE [LARGE SCALE GENOMIC DNA]</scope>
    <source>
        <strain>168</strain>
    </source>
</reference>
<reference key="2">
    <citation type="journal article" date="2003" name="Biochemistry">
        <title>LytG of Bacillus subtilis is a novel peptidoglycan hydrolase: the major active glucosaminidase.</title>
        <authorList>
            <person name="Horsburgh G.J."/>
            <person name="Atrih A."/>
            <person name="Williamson M.P."/>
            <person name="Foster S.J."/>
        </authorList>
    </citation>
    <scope>FUNCTION</scope>
    <scope>CHARACTERIZATION</scope>
    <scope>COFACTOR</scope>
    <scope>SUBCELLULAR LOCATION</scope>
    <scope>TRANSCRIPTIONAL REGULATION</scope>
    <source>
        <strain>168</strain>
    </source>
</reference>
<dbReference type="EC" id="3.2.1.-"/>
<dbReference type="EMBL" id="AL009126">
    <property type="protein sequence ID" value="CAB15090.1"/>
    <property type="molecule type" value="Genomic_DNA"/>
</dbReference>
<dbReference type="PIR" id="H70006">
    <property type="entry name" value="H70006"/>
</dbReference>
<dbReference type="RefSeq" id="NP_390990.1">
    <property type="nucleotide sequence ID" value="NC_000964.3"/>
</dbReference>
<dbReference type="RefSeq" id="WP_003228938.1">
    <property type="nucleotide sequence ID" value="NZ_OZ025638.1"/>
</dbReference>
<dbReference type="SMR" id="O32083"/>
<dbReference type="FunCoup" id="O32083">
    <property type="interactions" value="70"/>
</dbReference>
<dbReference type="STRING" id="224308.BSU31120"/>
<dbReference type="CAZy" id="GH73">
    <property type="family name" value="Glycoside Hydrolase Family 73"/>
</dbReference>
<dbReference type="PaxDb" id="224308-BSU31120"/>
<dbReference type="EnsemblBacteria" id="CAB15090">
    <property type="protein sequence ID" value="CAB15090"/>
    <property type="gene ID" value="BSU_31120"/>
</dbReference>
<dbReference type="GeneID" id="937146"/>
<dbReference type="KEGG" id="bsu:BSU31120"/>
<dbReference type="PATRIC" id="fig|224308.179.peg.3372"/>
<dbReference type="eggNOG" id="COG1705">
    <property type="taxonomic scope" value="Bacteria"/>
</dbReference>
<dbReference type="InParanoid" id="O32083"/>
<dbReference type="OrthoDB" id="977752at2"/>
<dbReference type="PhylomeDB" id="O32083"/>
<dbReference type="BioCyc" id="BSUB:BSU31120-MONOMER"/>
<dbReference type="Proteomes" id="UP000001570">
    <property type="component" value="Chromosome"/>
</dbReference>
<dbReference type="GO" id="GO:0005576">
    <property type="term" value="C:extracellular region"/>
    <property type="evidence" value="ECO:0007669"/>
    <property type="project" value="UniProtKB-KW"/>
</dbReference>
<dbReference type="GO" id="GO:0004040">
    <property type="term" value="F:amidase activity"/>
    <property type="evidence" value="ECO:0007669"/>
    <property type="project" value="InterPro"/>
</dbReference>
<dbReference type="GO" id="GO:0016798">
    <property type="term" value="F:hydrolase activity, acting on glycosyl bonds"/>
    <property type="evidence" value="ECO:0007669"/>
    <property type="project" value="UniProtKB-KW"/>
</dbReference>
<dbReference type="GO" id="GO:0071555">
    <property type="term" value="P:cell wall organization"/>
    <property type="evidence" value="ECO:0007669"/>
    <property type="project" value="UniProtKB-KW"/>
</dbReference>
<dbReference type="Gene3D" id="1.10.530.10">
    <property type="match status" value="1"/>
</dbReference>
<dbReference type="Gene3D" id="2.30.30.170">
    <property type="match status" value="1"/>
</dbReference>
<dbReference type="Gene3D" id="4.10.80.30">
    <property type="entry name" value="DNA polymerase, domain 6"/>
    <property type="match status" value="1"/>
</dbReference>
<dbReference type="InterPro" id="IPR051056">
    <property type="entry name" value="Glycosyl_Hydrolase_73"/>
</dbReference>
<dbReference type="InterPro" id="IPR025987">
    <property type="entry name" value="GW_dom"/>
</dbReference>
<dbReference type="InterPro" id="IPR038200">
    <property type="entry name" value="GW_dom_sf"/>
</dbReference>
<dbReference type="InterPro" id="IPR002901">
    <property type="entry name" value="MGlyc_endo_b_GlcNAc-like_dom"/>
</dbReference>
<dbReference type="NCBIfam" id="NF033202">
    <property type="entry name" value="GW_glycos_SH3"/>
    <property type="match status" value="1"/>
</dbReference>
<dbReference type="PANTHER" id="PTHR33308:SF10">
    <property type="entry name" value="EXO-GLUCOSAMINIDASE LYTG"/>
    <property type="match status" value="1"/>
</dbReference>
<dbReference type="PANTHER" id="PTHR33308">
    <property type="entry name" value="PEPTIDOGLYCAN HYDROLASE FLGJ"/>
    <property type="match status" value="1"/>
</dbReference>
<dbReference type="Pfam" id="PF01832">
    <property type="entry name" value="Glucosaminidase"/>
    <property type="match status" value="1"/>
</dbReference>
<dbReference type="Pfam" id="PF13457">
    <property type="entry name" value="GW"/>
    <property type="match status" value="1"/>
</dbReference>
<dbReference type="PRINTS" id="PR01002">
    <property type="entry name" value="FLGFLGJ"/>
</dbReference>
<dbReference type="SMART" id="SM00047">
    <property type="entry name" value="LYZ2"/>
    <property type="match status" value="1"/>
</dbReference>
<dbReference type="SUPFAM" id="SSF82057">
    <property type="entry name" value="Prokaryotic SH3-related domain"/>
    <property type="match status" value="1"/>
</dbReference>
<dbReference type="PROSITE" id="PS51780">
    <property type="entry name" value="GW"/>
    <property type="match status" value="1"/>
</dbReference>